<reference key="1">
    <citation type="journal article" date="2004" name="Proc. Natl. Acad. Sci. U.S.A.">
        <title>Complete genomes of two clinical Staphylococcus aureus strains: evidence for the rapid evolution of virulence and drug resistance.</title>
        <authorList>
            <person name="Holden M.T.G."/>
            <person name="Feil E.J."/>
            <person name="Lindsay J.A."/>
            <person name="Peacock S.J."/>
            <person name="Day N.P.J."/>
            <person name="Enright M.C."/>
            <person name="Foster T.J."/>
            <person name="Moore C.E."/>
            <person name="Hurst L."/>
            <person name="Atkin R."/>
            <person name="Barron A."/>
            <person name="Bason N."/>
            <person name="Bentley S.D."/>
            <person name="Chillingworth C."/>
            <person name="Chillingworth T."/>
            <person name="Churcher C."/>
            <person name="Clark L."/>
            <person name="Corton C."/>
            <person name="Cronin A."/>
            <person name="Doggett J."/>
            <person name="Dowd L."/>
            <person name="Feltwell T."/>
            <person name="Hance Z."/>
            <person name="Harris B."/>
            <person name="Hauser H."/>
            <person name="Holroyd S."/>
            <person name="Jagels K."/>
            <person name="James K.D."/>
            <person name="Lennard N."/>
            <person name="Line A."/>
            <person name="Mayes R."/>
            <person name="Moule S."/>
            <person name="Mungall K."/>
            <person name="Ormond D."/>
            <person name="Quail M.A."/>
            <person name="Rabbinowitsch E."/>
            <person name="Rutherford K.M."/>
            <person name="Sanders M."/>
            <person name="Sharp S."/>
            <person name="Simmonds M."/>
            <person name="Stevens K."/>
            <person name="Whitehead S."/>
            <person name="Barrell B.G."/>
            <person name="Spratt B.G."/>
            <person name="Parkhill J."/>
        </authorList>
    </citation>
    <scope>NUCLEOTIDE SEQUENCE [LARGE SCALE GENOMIC DNA]</scope>
    <source>
        <strain>MSSA476</strain>
    </source>
</reference>
<evidence type="ECO:0000250" key="1">
    <source>
        <dbReference type="UniProtKB" id="P0C053"/>
    </source>
</evidence>
<evidence type="ECO:0000250" key="2">
    <source>
        <dbReference type="UniProtKB" id="Q2G185"/>
    </source>
</evidence>
<evidence type="ECO:0000255" key="3"/>
<evidence type="ECO:0000256" key="4">
    <source>
        <dbReference type="SAM" id="MobiDB-lite"/>
    </source>
</evidence>
<evidence type="ECO:0000305" key="5"/>
<gene>
    <name evidence="2" type="primary">essB</name>
    <name type="ordered locus">SAS0262</name>
</gene>
<name>ESSB_STAAS</name>
<proteinExistence type="inferred from homology"/>
<organism>
    <name type="scientific">Staphylococcus aureus (strain MSSA476)</name>
    <dbReference type="NCBI Taxonomy" id="282459"/>
    <lineage>
        <taxon>Bacteria</taxon>
        <taxon>Bacillati</taxon>
        <taxon>Bacillota</taxon>
        <taxon>Bacilli</taxon>
        <taxon>Bacillales</taxon>
        <taxon>Staphylococcaceae</taxon>
        <taxon>Staphylococcus</taxon>
    </lineage>
</organism>
<comment type="function">
    <text evidence="1">Component of the type VII secretion system (Ess). Required for the secretion of EsxA and EsxB.</text>
</comment>
<comment type="subcellular location">
    <subcellularLocation>
        <location evidence="2">Cell membrane</location>
        <topology evidence="3">Single-pass membrane protein</topology>
    </subcellularLocation>
</comment>
<comment type="similarity">
    <text evidence="5">Belongs to the EssB family.</text>
</comment>
<keyword id="KW-1003">Cell membrane</keyword>
<keyword id="KW-0175">Coiled coil</keyword>
<keyword id="KW-0472">Membrane</keyword>
<keyword id="KW-0812">Transmembrane</keyword>
<keyword id="KW-1133">Transmembrane helix</keyword>
<keyword id="KW-0843">Virulence</keyword>
<accession>Q6GCI6</accession>
<dbReference type="EMBL" id="BX571857">
    <property type="protein sequence ID" value="CAG42033.1"/>
    <property type="molecule type" value="Genomic_DNA"/>
</dbReference>
<dbReference type="RefSeq" id="WP_000240338.1">
    <property type="nucleotide sequence ID" value="NC_002953.3"/>
</dbReference>
<dbReference type="SMR" id="Q6GCI6"/>
<dbReference type="KEGG" id="sas:SAS0262"/>
<dbReference type="HOGENOM" id="CLU_049737_0_0_9"/>
<dbReference type="GO" id="GO:0005886">
    <property type="term" value="C:plasma membrane"/>
    <property type="evidence" value="ECO:0007669"/>
    <property type="project" value="UniProtKB-SubCell"/>
</dbReference>
<dbReference type="Gene3D" id="1.10.510.10">
    <property type="entry name" value="Transferase(Phosphotransferase) domain 1"/>
    <property type="match status" value="1"/>
</dbReference>
<dbReference type="Gene3D" id="1.25.40.680">
    <property type="entry name" value="Type VII secretion system EssB, C-terminal-like domain"/>
    <property type="match status" value="1"/>
</dbReference>
<dbReference type="InterPro" id="IPR018778">
    <property type="entry name" value="T7SS_EssB"/>
</dbReference>
<dbReference type="InterPro" id="IPR042565">
    <property type="entry name" value="T7SS_EssB_C"/>
</dbReference>
<dbReference type="NCBIfam" id="TIGR03926">
    <property type="entry name" value="T7_EssB"/>
    <property type="match status" value="1"/>
</dbReference>
<dbReference type="Pfam" id="PF10140">
    <property type="entry name" value="YukC"/>
    <property type="match status" value="1"/>
</dbReference>
<sequence length="444" mass="52024">MVKNHNPKNEMQDMLTPLDAEEAAKTKLRLDMREIPKSSIKPEHFHLMYLLEQHSPYFIDAELTELRDSFQIHYDINDNHTPFDNIKSFTKNEKLRYLLNIKNLEEVNRTRYTFVLAPDELFFTRDGLPIAKTRGLQNVVDPLPVSEAEFLTRYKALVICAFNEKQSFDALVEGNLELHKGTPFETKVIEAATLDLLTAFLDEQYQKQEQDYSQNYAYVRKVGHTVFKWVAIGMTTLSVLLIAFLAFLYFSVMKHNERIEKGYQAFVKDDYTQVLNTYDDLDGKKLDKEALYIYAKSYIQTNKQGLEKDKKENLLNNVTPNSNKDYLLYWMELGQGHLDEAINIATYLDDNDITKLALINKLNEIKNNGDLSNDKRSEETKKYNDKLQDILDKEKQVKDEKAKSEEEKAKAKDEKLKQQEENEKKQKEQAQKDKEKRQEAERKK</sequence>
<feature type="chain" id="PRO_0000087066" description="Type VII secretion system protein EssB">
    <location>
        <begin position="1"/>
        <end position="444"/>
    </location>
</feature>
<feature type="topological domain" description="Cytoplasmic" evidence="2">
    <location>
        <begin position="1"/>
        <end position="229"/>
    </location>
</feature>
<feature type="transmembrane region" description="Helical" evidence="3">
    <location>
        <begin position="230"/>
        <end position="250"/>
    </location>
</feature>
<feature type="topological domain" description="Extracellular" evidence="2">
    <location>
        <begin position="251"/>
        <end position="444"/>
    </location>
</feature>
<feature type="region of interest" description="Disordered" evidence="4">
    <location>
        <begin position="366"/>
        <end position="444"/>
    </location>
</feature>
<feature type="coiled-coil region" evidence="3">
    <location>
        <begin position="387"/>
        <end position="443"/>
    </location>
</feature>
<feature type="compositionally biased region" description="Basic and acidic residues" evidence="4">
    <location>
        <begin position="372"/>
        <end position="444"/>
    </location>
</feature>
<protein>
    <recommendedName>
        <fullName evidence="2">Type VII secretion system protein EssB</fullName>
    </recommendedName>
</protein>